<keyword id="KW-0285">Flavoprotein</keyword>
<keyword id="KW-0288">FMN</keyword>
<keyword id="KW-0520">NAD</keyword>
<keyword id="KW-0521">NADP</keyword>
<keyword id="KW-0547">Nucleotide-binding</keyword>
<keyword id="KW-0560">Oxidoreductase</keyword>
<feature type="chain" id="PRO_1000200642" description="NAD(P)H dehydrogenase (quinone)">
    <location>
        <begin position="1"/>
        <end position="198"/>
    </location>
</feature>
<feature type="domain" description="Flavodoxin-like" evidence="1">
    <location>
        <begin position="4"/>
        <end position="189"/>
    </location>
</feature>
<feature type="binding site" evidence="1">
    <location>
        <begin position="10"/>
        <end position="15"/>
    </location>
    <ligand>
        <name>FMN</name>
        <dbReference type="ChEBI" id="CHEBI:58210"/>
    </ligand>
</feature>
<feature type="binding site" evidence="1">
    <location>
        <position position="12"/>
    </location>
    <ligand>
        <name>NAD(+)</name>
        <dbReference type="ChEBI" id="CHEBI:57540"/>
    </ligand>
</feature>
<feature type="binding site" evidence="1">
    <location>
        <begin position="78"/>
        <end position="80"/>
    </location>
    <ligand>
        <name>FMN</name>
        <dbReference type="ChEBI" id="CHEBI:58210"/>
    </ligand>
</feature>
<feature type="binding site" evidence="1">
    <location>
        <position position="98"/>
    </location>
    <ligand>
        <name>substrate</name>
    </ligand>
</feature>
<feature type="binding site" evidence="1">
    <location>
        <begin position="113"/>
        <end position="118"/>
    </location>
    <ligand>
        <name>FMN</name>
        <dbReference type="ChEBI" id="CHEBI:58210"/>
    </ligand>
</feature>
<feature type="binding site" evidence="1">
    <location>
        <position position="133"/>
    </location>
    <ligand>
        <name>FMN</name>
        <dbReference type="ChEBI" id="CHEBI:58210"/>
    </ligand>
</feature>
<protein>
    <recommendedName>
        <fullName evidence="1">NAD(P)H dehydrogenase (quinone)</fullName>
        <ecNumber evidence="1">1.6.5.2</ecNumber>
    </recommendedName>
    <alternativeName>
        <fullName>Flavoprotein WrbA</fullName>
    </alternativeName>
    <alternativeName>
        <fullName evidence="1">NAD(P)H:quinone oxidoreductase</fullName>
        <shortName evidence="1">NQO</shortName>
    </alternativeName>
</protein>
<evidence type="ECO:0000255" key="1">
    <source>
        <dbReference type="HAMAP-Rule" id="MF_01017"/>
    </source>
</evidence>
<name>NQOR_SALEP</name>
<dbReference type="EC" id="1.6.5.2" evidence="1"/>
<dbReference type="EMBL" id="AM933172">
    <property type="protein sequence ID" value="CAR32565.1"/>
    <property type="molecule type" value="Genomic_DNA"/>
</dbReference>
<dbReference type="SMR" id="B5R056"/>
<dbReference type="KEGG" id="set:SEN0983"/>
<dbReference type="HOGENOM" id="CLU_051402_0_2_6"/>
<dbReference type="Proteomes" id="UP000000613">
    <property type="component" value="Chromosome"/>
</dbReference>
<dbReference type="GO" id="GO:0016020">
    <property type="term" value="C:membrane"/>
    <property type="evidence" value="ECO:0007669"/>
    <property type="project" value="TreeGrafter"/>
</dbReference>
<dbReference type="GO" id="GO:0050660">
    <property type="term" value="F:flavin adenine dinucleotide binding"/>
    <property type="evidence" value="ECO:0007669"/>
    <property type="project" value="UniProtKB-UniRule"/>
</dbReference>
<dbReference type="GO" id="GO:0010181">
    <property type="term" value="F:FMN binding"/>
    <property type="evidence" value="ECO:0007669"/>
    <property type="project" value="InterPro"/>
</dbReference>
<dbReference type="GO" id="GO:0051287">
    <property type="term" value="F:NAD binding"/>
    <property type="evidence" value="ECO:0007669"/>
    <property type="project" value="UniProtKB-UniRule"/>
</dbReference>
<dbReference type="GO" id="GO:0050136">
    <property type="term" value="F:NADH:ubiquinone reductase (non-electrogenic) activity"/>
    <property type="evidence" value="ECO:0007669"/>
    <property type="project" value="RHEA"/>
</dbReference>
<dbReference type="GO" id="GO:0050661">
    <property type="term" value="F:NADP binding"/>
    <property type="evidence" value="ECO:0007669"/>
    <property type="project" value="UniProtKB-UniRule"/>
</dbReference>
<dbReference type="GO" id="GO:0008753">
    <property type="term" value="F:NADPH dehydrogenase (quinone) activity"/>
    <property type="evidence" value="ECO:0007669"/>
    <property type="project" value="RHEA"/>
</dbReference>
<dbReference type="FunFam" id="3.40.50.360:FF:000004">
    <property type="entry name" value="NAD(P)H dehydrogenase (quinone)"/>
    <property type="match status" value="1"/>
</dbReference>
<dbReference type="Gene3D" id="3.40.50.360">
    <property type="match status" value="1"/>
</dbReference>
<dbReference type="HAMAP" id="MF_01017">
    <property type="entry name" value="NQOR"/>
    <property type="match status" value="1"/>
</dbReference>
<dbReference type="InterPro" id="IPR008254">
    <property type="entry name" value="Flavodoxin/NO_synth"/>
</dbReference>
<dbReference type="InterPro" id="IPR029039">
    <property type="entry name" value="Flavoprotein-like_sf"/>
</dbReference>
<dbReference type="InterPro" id="IPR010089">
    <property type="entry name" value="Flavoprotein_WrbA-like"/>
</dbReference>
<dbReference type="InterPro" id="IPR005025">
    <property type="entry name" value="FMN_Rdtase-like_dom"/>
</dbReference>
<dbReference type="InterPro" id="IPR037513">
    <property type="entry name" value="NQO"/>
</dbReference>
<dbReference type="NCBIfam" id="TIGR01755">
    <property type="entry name" value="flav_wrbA"/>
    <property type="match status" value="1"/>
</dbReference>
<dbReference type="NCBIfam" id="NF002999">
    <property type="entry name" value="PRK03767.1"/>
    <property type="match status" value="1"/>
</dbReference>
<dbReference type="PANTHER" id="PTHR30546">
    <property type="entry name" value="FLAVODOXIN-RELATED PROTEIN WRBA-RELATED"/>
    <property type="match status" value="1"/>
</dbReference>
<dbReference type="PANTHER" id="PTHR30546:SF23">
    <property type="entry name" value="FLAVOPROTEIN-LIKE PROTEIN YCP4-RELATED"/>
    <property type="match status" value="1"/>
</dbReference>
<dbReference type="Pfam" id="PF03358">
    <property type="entry name" value="FMN_red"/>
    <property type="match status" value="1"/>
</dbReference>
<dbReference type="SUPFAM" id="SSF52218">
    <property type="entry name" value="Flavoproteins"/>
    <property type="match status" value="1"/>
</dbReference>
<dbReference type="PROSITE" id="PS50902">
    <property type="entry name" value="FLAVODOXIN_LIKE"/>
    <property type="match status" value="1"/>
</dbReference>
<organism>
    <name type="scientific">Salmonella enteritidis PT4 (strain P125109)</name>
    <dbReference type="NCBI Taxonomy" id="550537"/>
    <lineage>
        <taxon>Bacteria</taxon>
        <taxon>Pseudomonadati</taxon>
        <taxon>Pseudomonadota</taxon>
        <taxon>Gammaproteobacteria</taxon>
        <taxon>Enterobacterales</taxon>
        <taxon>Enterobacteriaceae</taxon>
        <taxon>Salmonella</taxon>
    </lineage>
</organism>
<comment type="catalytic activity">
    <reaction evidence="1">
        <text>a quinone + NADH + H(+) = a quinol + NAD(+)</text>
        <dbReference type="Rhea" id="RHEA:46160"/>
        <dbReference type="ChEBI" id="CHEBI:15378"/>
        <dbReference type="ChEBI" id="CHEBI:24646"/>
        <dbReference type="ChEBI" id="CHEBI:57540"/>
        <dbReference type="ChEBI" id="CHEBI:57945"/>
        <dbReference type="ChEBI" id="CHEBI:132124"/>
        <dbReference type="EC" id="1.6.5.2"/>
    </reaction>
</comment>
<comment type="catalytic activity">
    <reaction evidence="1">
        <text>a quinone + NADPH + H(+) = a quinol + NADP(+)</text>
        <dbReference type="Rhea" id="RHEA:46164"/>
        <dbReference type="ChEBI" id="CHEBI:15378"/>
        <dbReference type="ChEBI" id="CHEBI:24646"/>
        <dbReference type="ChEBI" id="CHEBI:57783"/>
        <dbReference type="ChEBI" id="CHEBI:58349"/>
        <dbReference type="ChEBI" id="CHEBI:132124"/>
        <dbReference type="EC" id="1.6.5.2"/>
    </reaction>
</comment>
<comment type="cofactor">
    <cofactor evidence="1">
        <name>FMN</name>
        <dbReference type="ChEBI" id="CHEBI:58210"/>
    </cofactor>
    <text evidence="1">Binds 1 FMN per monomer.</text>
</comment>
<comment type="similarity">
    <text evidence="1">Belongs to the WrbA family.</text>
</comment>
<reference key="1">
    <citation type="journal article" date="2008" name="Genome Res.">
        <title>Comparative genome analysis of Salmonella enteritidis PT4 and Salmonella gallinarum 287/91 provides insights into evolutionary and host adaptation pathways.</title>
        <authorList>
            <person name="Thomson N.R."/>
            <person name="Clayton D.J."/>
            <person name="Windhorst D."/>
            <person name="Vernikos G."/>
            <person name="Davidson S."/>
            <person name="Churcher C."/>
            <person name="Quail M.A."/>
            <person name="Stevens M."/>
            <person name="Jones M.A."/>
            <person name="Watson M."/>
            <person name="Barron A."/>
            <person name="Layton A."/>
            <person name="Pickard D."/>
            <person name="Kingsley R.A."/>
            <person name="Bignell A."/>
            <person name="Clark L."/>
            <person name="Harris B."/>
            <person name="Ormond D."/>
            <person name="Abdellah Z."/>
            <person name="Brooks K."/>
            <person name="Cherevach I."/>
            <person name="Chillingworth T."/>
            <person name="Woodward J."/>
            <person name="Norberczak H."/>
            <person name="Lord A."/>
            <person name="Arrowsmith C."/>
            <person name="Jagels K."/>
            <person name="Moule S."/>
            <person name="Mungall K."/>
            <person name="Saunders M."/>
            <person name="Whitehead S."/>
            <person name="Chabalgoity J.A."/>
            <person name="Maskell D."/>
            <person name="Humphreys T."/>
            <person name="Roberts M."/>
            <person name="Barrow P.A."/>
            <person name="Dougan G."/>
            <person name="Parkhill J."/>
        </authorList>
    </citation>
    <scope>NUCLEOTIDE SEQUENCE [LARGE SCALE GENOMIC DNA]</scope>
    <source>
        <strain>P125109</strain>
    </source>
</reference>
<sequence>MAKILVLYYSMYGHIETMAHAVAEGAKKVDGAEVIIKRVPETMPPEIFAKAGGKTQNAPVATPQELADYDAIIFGTPTRFGNMSGQMRTFLDQTGGLWASGALYGKLGSVFSSTGTGGGQEQTITSTWTTLAHHGMVIVPIGYAAQELFDVSQVRGGTPYGATTIAGGDGSRQPSQEELSIARYQGEYVAGLAVKLNG</sequence>
<proteinExistence type="inferred from homology"/>
<accession>B5R056</accession>
<gene>
    <name type="ordered locus">SEN0983</name>
</gene>